<dbReference type="EC" id="4.2.3.71" evidence="3"/>
<dbReference type="EC" id="4.2.3.-" evidence="3"/>
<dbReference type="EC" id="4.2.3.15" evidence="3"/>
<dbReference type="EC" id="4.2.3.113" evidence="3"/>
<dbReference type="EMBL" id="JN402388">
    <property type="protein sequence ID" value="AEM23825.1"/>
    <property type="molecule type" value="mRNA"/>
</dbReference>
<dbReference type="SMR" id="G8H5M7"/>
<dbReference type="UniPathway" id="UPA00213"/>
<dbReference type="GO" id="GO:0000287">
    <property type="term" value="F:magnesium ion binding"/>
    <property type="evidence" value="ECO:0007669"/>
    <property type="project" value="InterPro"/>
</dbReference>
<dbReference type="GO" id="GO:0010333">
    <property type="term" value="F:terpene synthase activity"/>
    <property type="evidence" value="ECO:0000314"/>
    <property type="project" value="UniProtKB"/>
</dbReference>
<dbReference type="GO" id="GO:0016102">
    <property type="term" value="P:diterpenoid biosynthetic process"/>
    <property type="evidence" value="ECO:0007669"/>
    <property type="project" value="InterPro"/>
</dbReference>
<dbReference type="GO" id="GO:0016114">
    <property type="term" value="P:terpenoid biosynthetic process"/>
    <property type="evidence" value="ECO:0000314"/>
    <property type="project" value="UniProtKB"/>
</dbReference>
<dbReference type="CDD" id="cd00684">
    <property type="entry name" value="Terpene_cyclase_plant_C1"/>
    <property type="match status" value="1"/>
</dbReference>
<dbReference type="FunFam" id="1.10.600.10:FF:000007">
    <property type="entry name" value="Isoprene synthase, chloroplastic"/>
    <property type="match status" value="1"/>
</dbReference>
<dbReference type="FunFam" id="1.50.10.130:FF:000001">
    <property type="entry name" value="Isoprene synthase, chloroplastic"/>
    <property type="match status" value="1"/>
</dbReference>
<dbReference type="Gene3D" id="1.10.600.10">
    <property type="entry name" value="Farnesyl Diphosphate Synthase"/>
    <property type="match status" value="1"/>
</dbReference>
<dbReference type="Gene3D" id="1.50.10.130">
    <property type="entry name" value="Terpene synthase, N-terminal domain"/>
    <property type="match status" value="1"/>
</dbReference>
<dbReference type="InterPro" id="IPR008949">
    <property type="entry name" value="Isoprenoid_synthase_dom_sf"/>
</dbReference>
<dbReference type="InterPro" id="IPR034741">
    <property type="entry name" value="Terpene_cyclase-like_1_C"/>
</dbReference>
<dbReference type="InterPro" id="IPR044814">
    <property type="entry name" value="Terpene_cyclase_plant_C1"/>
</dbReference>
<dbReference type="InterPro" id="IPR001906">
    <property type="entry name" value="Terpene_synth_N"/>
</dbReference>
<dbReference type="InterPro" id="IPR036965">
    <property type="entry name" value="Terpene_synth_N_sf"/>
</dbReference>
<dbReference type="InterPro" id="IPR050148">
    <property type="entry name" value="Terpene_synthase-like"/>
</dbReference>
<dbReference type="InterPro" id="IPR005630">
    <property type="entry name" value="Terpene_synthase_metal-bd"/>
</dbReference>
<dbReference type="InterPro" id="IPR008930">
    <property type="entry name" value="Terpenoid_cyclase/PrenylTrfase"/>
</dbReference>
<dbReference type="PANTHER" id="PTHR31225">
    <property type="entry name" value="OS04G0344100 PROTEIN-RELATED"/>
    <property type="match status" value="1"/>
</dbReference>
<dbReference type="PANTHER" id="PTHR31225:SF246">
    <property type="entry name" value="SESQUITERPENE SYNTHASE 9"/>
    <property type="match status" value="1"/>
</dbReference>
<dbReference type="Pfam" id="PF01397">
    <property type="entry name" value="Terpene_synth"/>
    <property type="match status" value="1"/>
</dbReference>
<dbReference type="Pfam" id="PF03936">
    <property type="entry name" value="Terpene_synth_C"/>
    <property type="match status" value="1"/>
</dbReference>
<dbReference type="SFLD" id="SFLDS00005">
    <property type="entry name" value="Isoprenoid_Synthase_Type_I"/>
    <property type="match status" value="1"/>
</dbReference>
<dbReference type="SFLD" id="SFLDG01019">
    <property type="entry name" value="Terpene_Cyclase_Like_1_C_Termi"/>
    <property type="match status" value="1"/>
</dbReference>
<dbReference type="SUPFAM" id="SSF48239">
    <property type="entry name" value="Terpenoid cyclases/Protein prenyltransferases"/>
    <property type="match status" value="1"/>
</dbReference>
<dbReference type="SUPFAM" id="SSF48576">
    <property type="entry name" value="Terpenoid synthases"/>
    <property type="match status" value="1"/>
</dbReference>
<protein>
    <recommendedName>
        <fullName evidence="4">Terpene synthase 9</fullName>
        <shortName evidence="4">ShTPS9</shortName>
    </recommendedName>
    <alternativeName>
        <fullName evidence="4">(1E,4E)-germacrene B synthase TPS9</fullName>
        <ecNumber evidence="3">4.2.3.71</ecNumber>
    </alternativeName>
    <alternativeName>
        <fullName evidence="4">Alpha-humulene synthase TPS9</fullName>
        <ecNumber evidence="3">4.2.3.-</ecNumber>
    </alternativeName>
    <alternativeName>
        <fullName evidence="4">Beta-myrcene synthase TPS9</fullName>
        <ecNumber evidence="3">4.2.3.15</ecNumber>
    </alternativeName>
    <alternativeName>
        <fullName evidence="4">Germacrene A synthase TPS9</fullName>
        <ecNumber evidence="3">4.2.3.-</ecNumber>
    </alternativeName>
    <alternativeName>
        <fullName evidence="4">Limonene synthase TPS9</fullName>
        <ecNumber evidence="3">4.2.3.-</ecNumber>
    </alternativeName>
    <alternativeName>
        <fullName evidence="4">Terpinolene synthase TPS9</fullName>
        <ecNumber evidence="3">4.2.3.113</ecNumber>
    </alternativeName>
</protein>
<sequence length="544" mass="63794">MAASSANKSRPLANFHPTVWGYHFLSYTHEITNQEKVEVDEYKETIRKMLVEAPEGSEQKLVLIDAMQRLGVAYHFHNEIETSIQNIFDAPKQNNNLHIVSLHFRLVRQQGHYMSSDVFKQFTNQDGKFKERLTNDVQGLLSLYEASYLRVRDEEILEEALAFTTTHLKSIVSNMSNNNNSLKVEVSEALTQPIRMTLPRMEARRYISIYENNDAHNHLLLKFAKLDFNMLQKLHQRELSDLTRWWKDLDFANKYPYARDRLVECYFWILGVYFEPKYSRARKMMTKVLKMTSIIDDTFDAYATFDELEPFNDAIQRWDANAIDSIQPYMRPAYQAFLDIYSEMEQVLSKEGKLDRVYYAKNEMKKLVRAYFKETQWLNDCDHIPKYEEHMENSLVSGGYMMIPTTCLVGMEEFISIETFEWLMNDPLIVRASSLIARAMNDIVGHEVEQERGHVASLIECYMKDYGASKQEAYAKFKKDVTNAWKDINKEFFRPTEVPMFVLERVLNLTRAADTLYKEKDAYTNAKGKLKNMINSILIESVKI</sequence>
<evidence type="ECO:0000250" key="1">
    <source>
        <dbReference type="UniProtKB" id="A0A1C9J6A7"/>
    </source>
</evidence>
<evidence type="ECO:0000250" key="2">
    <source>
        <dbReference type="UniProtKB" id="Q40577"/>
    </source>
</evidence>
<evidence type="ECO:0000269" key="3">
    <source>
    </source>
</evidence>
<evidence type="ECO:0000303" key="4">
    <source>
    </source>
</evidence>
<evidence type="ECO:0000305" key="5"/>
<organism>
    <name type="scientific">Solanum habrochaites</name>
    <name type="common">Wild tomato</name>
    <name type="synonym">Lycopersicon hirsutum</name>
    <dbReference type="NCBI Taxonomy" id="62890"/>
    <lineage>
        <taxon>Eukaryota</taxon>
        <taxon>Viridiplantae</taxon>
        <taxon>Streptophyta</taxon>
        <taxon>Embryophyta</taxon>
        <taxon>Tracheophyta</taxon>
        <taxon>Spermatophyta</taxon>
        <taxon>Magnoliopsida</taxon>
        <taxon>eudicotyledons</taxon>
        <taxon>Gunneridae</taxon>
        <taxon>Pentapetalae</taxon>
        <taxon>asterids</taxon>
        <taxon>lamiids</taxon>
        <taxon>Solanales</taxon>
        <taxon>Solanaceae</taxon>
        <taxon>Solanoideae</taxon>
        <taxon>Solaneae</taxon>
        <taxon>Solanum</taxon>
        <taxon>Solanum subgen. Lycopersicon</taxon>
    </lineage>
</organism>
<feature type="chain" id="PRO_0000454682" description="Terpene synthase 9">
    <location>
        <begin position="1"/>
        <end position="544"/>
    </location>
</feature>
<feature type="short sequence motif" description="DDXXD motif" evidence="1">
    <location>
        <begin position="296"/>
        <end position="300"/>
    </location>
</feature>
<feature type="binding site" evidence="2">
    <location>
        <position position="296"/>
    </location>
    <ligand>
        <name>Mg(2+)</name>
        <dbReference type="ChEBI" id="CHEBI:18420"/>
        <label>1</label>
    </ligand>
</feature>
<feature type="binding site" evidence="2">
    <location>
        <position position="296"/>
    </location>
    <ligand>
        <name>Mg(2+)</name>
        <dbReference type="ChEBI" id="CHEBI:18420"/>
        <label>2</label>
    </ligand>
</feature>
<feature type="binding site" evidence="2">
    <location>
        <position position="300"/>
    </location>
    <ligand>
        <name>Mg(2+)</name>
        <dbReference type="ChEBI" id="CHEBI:18420"/>
        <label>1</label>
    </ligand>
</feature>
<feature type="binding site" evidence="2">
    <location>
        <position position="300"/>
    </location>
    <ligand>
        <name>Mg(2+)</name>
        <dbReference type="ChEBI" id="CHEBI:18420"/>
        <label>2</label>
    </ligand>
</feature>
<feature type="binding site" evidence="2">
    <location>
        <position position="449"/>
    </location>
    <ligand>
        <name>Mg(2+)</name>
        <dbReference type="ChEBI" id="CHEBI:18420"/>
        <label>3</label>
    </ligand>
</feature>
<comment type="function">
    <text evidence="3">Sesquiterpene synthase involved in the biosynthesis of volatile compounds (PubMed:21818683). Mediates the conversion of (2E,6E)-farnesyl diphosphate (FPP) into (1E,4E)-germacrene B, but also smaller amounts of germacrene A and C, and of (2Z,6Z)-farnesyl diphosphate ((ZZ)-FPP) into alpha-humulene, germacrene A and germacrene B (PubMed:21818683). Can act with a low efficiency as a monoterpene synthase with geranyl diphosphate (GPP) as substrate, thus producing beta-myrcene, limonene and terpinolene (PubMed:21818683).</text>
</comment>
<comment type="catalytic activity">
    <reaction evidence="3">
        <text>(2E,6E)-farnesyl diphosphate = (1E,4E)-germacrene B + diphosphate</text>
        <dbReference type="Rhea" id="RHEA:25444"/>
        <dbReference type="ChEBI" id="CHEBI:5337"/>
        <dbReference type="ChEBI" id="CHEBI:33019"/>
        <dbReference type="ChEBI" id="CHEBI:175763"/>
        <dbReference type="EC" id="4.2.3.71"/>
    </reaction>
    <physiologicalReaction direction="left-to-right" evidence="3">
        <dbReference type="Rhea" id="RHEA:25445"/>
    </physiologicalReaction>
</comment>
<comment type="catalytic activity">
    <reaction evidence="3">
        <text>(2E)-geranyl diphosphate = terpinolene + diphosphate</text>
        <dbReference type="Rhea" id="RHEA:25500"/>
        <dbReference type="ChEBI" id="CHEBI:9457"/>
        <dbReference type="ChEBI" id="CHEBI:33019"/>
        <dbReference type="ChEBI" id="CHEBI:58057"/>
        <dbReference type="EC" id="4.2.3.113"/>
    </reaction>
    <physiologicalReaction direction="left-to-right" evidence="3">
        <dbReference type="Rhea" id="RHEA:25501"/>
    </physiologicalReaction>
</comment>
<comment type="catalytic activity">
    <reaction evidence="3">
        <text>(2E)-geranyl diphosphate = limonene + diphosphate</text>
        <dbReference type="Rhea" id="RHEA:68640"/>
        <dbReference type="ChEBI" id="CHEBI:15384"/>
        <dbReference type="ChEBI" id="CHEBI:33019"/>
        <dbReference type="ChEBI" id="CHEBI:58057"/>
    </reaction>
    <physiologicalReaction direction="left-to-right" evidence="3">
        <dbReference type="Rhea" id="RHEA:68641"/>
    </physiologicalReaction>
</comment>
<comment type="catalytic activity">
    <reaction evidence="3">
        <text>(2E)-geranyl diphosphate = beta-myrcene + diphosphate</text>
        <dbReference type="Rhea" id="RHEA:16965"/>
        <dbReference type="ChEBI" id="CHEBI:17221"/>
        <dbReference type="ChEBI" id="CHEBI:33019"/>
        <dbReference type="ChEBI" id="CHEBI:58057"/>
        <dbReference type="EC" id="4.2.3.15"/>
    </reaction>
    <physiologicalReaction direction="left-to-right" evidence="3">
        <dbReference type="Rhea" id="RHEA:16966"/>
    </physiologicalReaction>
</comment>
<comment type="catalytic activity">
    <reaction evidence="3">
        <text>(2Z,6Z)-farnesyl diphosphate = germacrene A + diphosphate</text>
        <dbReference type="Rhea" id="RHEA:68776"/>
        <dbReference type="ChEBI" id="CHEBI:33019"/>
        <dbReference type="ChEBI" id="CHEBI:36517"/>
        <dbReference type="ChEBI" id="CHEBI:60374"/>
    </reaction>
    <physiologicalReaction direction="left-to-right" evidence="3">
        <dbReference type="Rhea" id="RHEA:68777"/>
    </physiologicalReaction>
</comment>
<comment type="catalytic activity">
    <reaction evidence="3">
        <text>(2Z,6Z)-farnesyl diphosphate = alpha-humulene + diphosphate</text>
        <dbReference type="Rhea" id="RHEA:68780"/>
        <dbReference type="ChEBI" id="CHEBI:5768"/>
        <dbReference type="ChEBI" id="CHEBI:33019"/>
        <dbReference type="ChEBI" id="CHEBI:60374"/>
    </reaction>
    <physiologicalReaction direction="left-to-right" evidence="3">
        <dbReference type="Rhea" id="RHEA:68781"/>
    </physiologicalReaction>
</comment>
<comment type="cofactor">
    <cofactor evidence="1">
        <name>Mg(2+)</name>
        <dbReference type="ChEBI" id="CHEBI:18420"/>
    </cofactor>
    <cofactor evidence="1">
        <name>Mn(2+)</name>
        <dbReference type="ChEBI" id="CHEBI:29035"/>
    </cofactor>
    <text evidence="1">Binds 3 Mg(2+) or Mn(2+) ions per subunit.</text>
</comment>
<comment type="pathway">
    <text evidence="3">Secondary metabolite biosynthesis; terpenoid biosynthesis.</text>
</comment>
<comment type="domain">
    <text evidence="2">The Asp-Asp-Xaa-Xaa-Asp/Glu (DDXXD/E) motif is important for the catalytic activity, presumably through binding to Mg(2+).</text>
</comment>
<comment type="similarity">
    <text evidence="5">Belongs to the terpene synthase family. Tpsa subfamily.</text>
</comment>
<reference key="1">
    <citation type="journal article" date="2011" name="Plant Mol. Biol.">
        <title>RNA-seq discovery, functional characterization, and comparison of sesquiterpene synthases from Solanum lycopersicum and Solanum habrochaites trichomes.</title>
        <authorList>
            <person name="Bleeker P.M."/>
            <person name="Spyropoulou E.A."/>
            <person name="Diergaarde P.J."/>
            <person name="Volpin H."/>
            <person name="De Both M.T.J."/>
            <person name="Zerbe P."/>
            <person name="Bohlmann J."/>
            <person name="Falara V."/>
            <person name="Matsuba Y."/>
            <person name="Pichersky E."/>
            <person name="Haring M.A."/>
            <person name="Schuurink R.C."/>
        </authorList>
    </citation>
    <scope>NUCLEOTIDE SEQUENCE [MRNA]</scope>
    <scope>FUNCTION</scope>
    <scope>CATALYTIC ACTIVITY</scope>
    <scope>PATHWAY</scope>
    <scope>GENE FAMILY</scope>
    <source>
        <strain>cv. PI127826</strain>
    </source>
</reference>
<name>TPS9_SOLHA</name>
<keyword id="KW-0456">Lyase</keyword>
<keyword id="KW-0460">Magnesium</keyword>
<keyword id="KW-0479">Metal-binding</keyword>
<accession>G8H5M7</accession>
<gene>
    <name evidence="4" type="primary">TPS9</name>
</gene>
<proteinExistence type="evidence at protein level"/>